<dbReference type="EMBL" id="CR382137">
    <property type="protein sequence ID" value="CAG88477.1"/>
    <property type="molecule type" value="Genomic_DNA"/>
</dbReference>
<dbReference type="RefSeq" id="XP_460204.1">
    <property type="nucleotide sequence ID" value="XM_460204.1"/>
</dbReference>
<dbReference type="SMR" id="Q6BNL6"/>
<dbReference type="FunCoup" id="Q6BNL6">
    <property type="interactions" value="307"/>
</dbReference>
<dbReference type="STRING" id="284592.Q6BNL6"/>
<dbReference type="GeneID" id="2902725"/>
<dbReference type="KEGG" id="dha:DEHA2E20746g"/>
<dbReference type="VEuPathDB" id="FungiDB:DEHA2E20746g"/>
<dbReference type="eggNOG" id="KOG1973">
    <property type="taxonomic scope" value="Eukaryota"/>
</dbReference>
<dbReference type="HOGENOM" id="CLU_031900_2_0_1"/>
<dbReference type="InParanoid" id="Q6BNL6"/>
<dbReference type="OMA" id="PIYITPQ"/>
<dbReference type="OrthoDB" id="5411773at2759"/>
<dbReference type="Proteomes" id="UP000000599">
    <property type="component" value="Chromosome E"/>
</dbReference>
<dbReference type="GO" id="GO:0005829">
    <property type="term" value="C:cytosol"/>
    <property type="evidence" value="ECO:0007669"/>
    <property type="project" value="EnsemblFungi"/>
</dbReference>
<dbReference type="GO" id="GO:0035267">
    <property type="term" value="C:NuA4 histone acetyltransferase complex"/>
    <property type="evidence" value="ECO:0007669"/>
    <property type="project" value="EnsemblFungi"/>
</dbReference>
<dbReference type="GO" id="GO:0000786">
    <property type="term" value="C:nucleosome"/>
    <property type="evidence" value="ECO:0007669"/>
    <property type="project" value="EnsemblFungi"/>
</dbReference>
<dbReference type="GO" id="GO:0005634">
    <property type="term" value="C:nucleus"/>
    <property type="evidence" value="ECO:0007669"/>
    <property type="project" value="UniProtKB-SubCell"/>
</dbReference>
<dbReference type="GO" id="GO:0032777">
    <property type="term" value="C:piccolo histone acetyltransferase complex"/>
    <property type="evidence" value="ECO:0007669"/>
    <property type="project" value="EnsemblFungi"/>
</dbReference>
<dbReference type="GO" id="GO:0004402">
    <property type="term" value="F:histone acetyltransferase activity"/>
    <property type="evidence" value="ECO:0007669"/>
    <property type="project" value="EnsemblFungi"/>
</dbReference>
<dbReference type="GO" id="GO:0140002">
    <property type="term" value="F:histone H3K4me3 reader activity"/>
    <property type="evidence" value="ECO:0007669"/>
    <property type="project" value="EnsemblFungi"/>
</dbReference>
<dbReference type="GO" id="GO:0035064">
    <property type="term" value="F:methylated histone binding"/>
    <property type="evidence" value="ECO:0007669"/>
    <property type="project" value="EnsemblFungi"/>
</dbReference>
<dbReference type="GO" id="GO:0008270">
    <property type="term" value="F:zinc ion binding"/>
    <property type="evidence" value="ECO:0007669"/>
    <property type="project" value="UniProtKB-KW"/>
</dbReference>
<dbReference type="GO" id="GO:0006281">
    <property type="term" value="P:DNA repair"/>
    <property type="evidence" value="ECO:0007669"/>
    <property type="project" value="UniProtKB-KW"/>
</dbReference>
<dbReference type="GO" id="GO:0051321">
    <property type="term" value="P:meiotic cell cycle"/>
    <property type="evidence" value="ECO:0007669"/>
    <property type="project" value="UniProtKB-KW"/>
</dbReference>
<dbReference type="GO" id="GO:0006355">
    <property type="term" value="P:regulation of DNA-templated transcription"/>
    <property type="evidence" value="ECO:0007669"/>
    <property type="project" value="TreeGrafter"/>
</dbReference>
<dbReference type="CDD" id="cd16858">
    <property type="entry name" value="ING_ING3_Yng2p"/>
    <property type="match status" value="1"/>
</dbReference>
<dbReference type="CDD" id="cd15505">
    <property type="entry name" value="PHD_ING"/>
    <property type="match status" value="1"/>
</dbReference>
<dbReference type="FunFam" id="3.30.40.10:FF:000436">
    <property type="entry name" value="Chromatin modification-related protein"/>
    <property type="match status" value="1"/>
</dbReference>
<dbReference type="Gene3D" id="6.10.140.1740">
    <property type="match status" value="1"/>
</dbReference>
<dbReference type="Gene3D" id="3.30.40.10">
    <property type="entry name" value="Zinc/RING finger domain, C3HC4 (zinc finger)"/>
    <property type="match status" value="1"/>
</dbReference>
<dbReference type="InterPro" id="IPR028651">
    <property type="entry name" value="ING_fam"/>
</dbReference>
<dbReference type="InterPro" id="IPR024610">
    <property type="entry name" value="ING_N_histone-binding"/>
</dbReference>
<dbReference type="InterPro" id="IPR019786">
    <property type="entry name" value="Zinc_finger_PHD-type_CS"/>
</dbReference>
<dbReference type="InterPro" id="IPR011011">
    <property type="entry name" value="Znf_FYVE_PHD"/>
</dbReference>
<dbReference type="InterPro" id="IPR001965">
    <property type="entry name" value="Znf_PHD"/>
</dbReference>
<dbReference type="InterPro" id="IPR019787">
    <property type="entry name" value="Znf_PHD-finger"/>
</dbReference>
<dbReference type="InterPro" id="IPR013083">
    <property type="entry name" value="Znf_RING/FYVE/PHD"/>
</dbReference>
<dbReference type="PANTHER" id="PTHR10333:SF100">
    <property type="entry name" value="CHROMATIN MODIFICATION-RELATED PROTEIN YNG2"/>
    <property type="match status" value="1"/>
</dbReference>
<dbReference type="PANTHER" id="PTHR10333">
    <property type="entry name" value="INHIBITOR OF GROWTH PROTEIN"/>
    <property type="match status" value="1"/>
</dbReference>
<dbReference type="Pfam" id="PF12998">
    <property type="entry name" value="ING"/>
    <property type="match status" value="1"/>
</dbReference>
<dbReference type="SMART" id="SM01408">
    <property type="entry name" value="ING"/>
    <property type="match status" value="1"/>
</dbReference>
<dbReference type="SMART" id="SM00249">
    <property type="entry name" value="PHD"/>
    <property type="match status" value="1"/>
</dbReference>
<dbReference type="SUPFAM" id="SSF57903">
    <property type="entry name" value="FYVE/PHD zinc finger"/>
    <property type="match status" value="1"/>
</dbReference>
<dbReference type="PROSITE" id="PS01359">
    <property type="entry name" value="ZF_PHD_1"/>
    <property type="match status" value="1"/>
</dbReference>
<dbReference type="PROSITE" id="PS50016">
    <property type="entry name" value="ZF_PHD_2"/>
    <property type="match status" value="1"/>
</dbReference>
<feature type="chain" id="PRO_0000212676" description="Chromatin modification-related protein YNG2">
    <location>
        <begin position="1"/>
        <end position="285"/>
    </location>
</feature>
<feature type="zinc finger region" description="PHD-type" evidence="4">
    <location>
        <begin position="225"/>
        <end position="276"/>
    </location>
</feature>
<feature type="region of interest" description="Disordered" evidence="5">
    <location>
        <begin position="138"/>
        <end position="218"/>
    </location>
</feature>
<feature type="coiled-coil region" evidence="3">
    <location>
        <begin position="19"/>
        <end position="54"/>
    </location>
</feature>
<feature type="compositionally biased region" description="Polar residues" evidence="5">
    <location>
        <begin position="138"/>
        <end position="165"/>
    </location>
</feature>
<feature type="compositionally biased region" description="Basic and acidic residues" evidence="5">
    <location>
        <begin position="193"/>
        <end position="207"/>
    </location>
</feature>
<feature type="binding site" evidence="2">
    <location>
        <position position="228"/>
    </location>
    <ligand>
        <name>Zn(2+)</name>
        <dbReference type="ChEBI" id="CHEBI:29105"/>
        <label>1</label>
    </ligand>
</feature>
<feature type="binding site" evidence="2">
    <location>
        <position position="230"/>
    </location>
    <ligand>
        <name>Zn(2+)</name>
        <dbReference type="ChEBI" id="CHEBI:29105"/>
        <label>1</label>
    </ligand>
</feature>
<feature type="binding site" evidence="2">
    <location>
        <position position="241"/>
    </location>
    <ligand>
        <name>Zn(2+)</name>
        <dbReference type="ChEBI" id="CHEBI:29105"/>
        <label>2</label>
    </ligand>
</feature>
<feature type="binding site" evidence="2">
    <location>
        <position position="246"/>
    </location>
    <ligand>
        <name>Zn(2+)</name>
        <dbReference type="ChEBI" id="CHEBI:29105"/>
        <label>2</label>
    </ligand>
</feature>
<feature type="binding site" evidence="2">
    <location>
        <position position="252"/>
    </location>
    <ligand>
        <name>Zn(2+)</name>
        <dbReference type="ChEBI" id="CHEBI:29105"/>
        <label>1</label>
    </ligand>
</feature>
<feature type="binding site" evidence="2">
    <location>
        <position position="255"/>
    </location>
    <ligand>
        <name>Zn(2+)</name>
        <dbReference type="ChEBI" id="CHEBI:29105"/>
        <label>1</label>
    </ligand>
</feature>
<feature type="binding site" evidence="2">
    <location>
        <position position="270"/>
    </location>
    <ligand>
        <name>Zn(2+)</name>
        <dbReference type="ChEBI" id="CHEBI:29105"/>
        <label>2</label>
    </ligand>
</feature>
<feature type="binding site" evidence="2">
    <location>
        <position position="273"/>
    </location>
    <ligand>
        <name>Zn(2+)</name>
        <dbReference type="ChEBI" id="CHEBI:29105"/>
        <label>2</label>
    </ligand>
</feature>
<feature type="site" description="Histone H3K4me3 binding" evidence="2">
    <location>
        <position position="227"/>
    </location>
</feature>
<feature type="site" description="Histone H3K4me3 binding" evidence="2">
    <location>
        <position position="238"/>
    </location>
</feature>
<feature type="site" description="Histone H3K4me3 binding" evidence="2">
    <location>
        <position position="242"/>
    </location>
</feature>
<feature type="site" description="Histone H3K4me3 binding" evidence="2">
    <location>
        <position position="250"/>
    </location>
</feature>
<accession>Q6BNL6</accession>
<reference key="1">
    <citation type="journal article" date="2004" name="Nature">
        <title>Genome evolution in yeasts.</title>
        <authorList>
            <person name="Dujon B."/>
            <person name="Sherman D."/>
            <person name="Fischer G."/>
            <person name="Durrens P."/>
            <person name="Casaregola S."/>
            <person name="Lafontaine I."/>
            <person name="de Montigny J."/>
            <person name="Marck C."/>
            <person name="Neuveglise C."/>
            <person name="Talla E."/>
            <person name="Goffard N."/>
            <person name="Frangeul L."/>
            <person name="Aigle M."/>
            <person name="Anthouard V."/>
            <person name="Babour A."/>
            <person name="Barbe V."/>
            <person name="Barnay S."/>
            <person name="Blanchin S."/>
            <person name="Beckerich J.-M."/>
            <person name="Beyne E."/>
            <person name="Bleykasten C."/>
            <person name="Boisrame A."/>
            <person name="Boyer J."/>
            <person name="Cattolico L."/>
            <person name="Confanioleri F."/>
            <person name="de Daruvar A."/>
            <person name="Despons L."/>
            <person name="Fabre E."/>
            <person name="Fairhead C."/>
            <person name="Ferry-Dumazet H."/>
            <person name="Groppi A."/>
            <person name="Hantraye F."/>
            <person name="Hennequin C."/>
            <person name="Jauniaux N."/>
            <person name="Joyet P."/>
            <person name="Kachouri R."/>
            <person name="Kerrest A."/>
            <person name="Koszul R."/>
            <person name="Lemaire M."/>
            <person name="Lesur I."/>
            <person name="Ma L."/>
            <person name="Muller H."/>
            <person name="Nicaud J.-M."/>
            <person name="Nikolski M."/>
            <person name="Oztas S."/>
            <person name="Ozier-Kalogeropoulos O."/>
            <person name="Pellenz S."/>
            <person name="Potier S."/>
            <person name="Richard G.-F."/>
            <person name="Straub M.-L."/>
            <person name="Suleau A."/>
            <person name="Swennen D."/>
            <person name="Tekaia F."/>
            <person name="Wesolowski-Louvel M."/>
            <person name="Westhof E."/>
            <person name="Wirth B."/>
            <person name="Zeniou-Meyer M."/>
            <person name="Zivanovic Y."/>
            <person name="Bolotin-Fukuhara M."/>
            <person name="Thierry A."/>
            <person name="Bouchier C."/>
            <person name="Caudron B."/>
            <person name="Scarpelli C."/>
            <person name="Gaillardin C."/>
            <person name="Weissenbach J."/>
            <person name="Wincker P."/>
            <person name="Souciet J.-L."/>
        </authorList>
    </citation>
    <scope>NUCLEOTIDE SEQUENCE [LARGE SCALE GENOMIC DNA]</scope>
    <source>
        <strain>ATCC 36239 / CBS 767 / BCRC 21394 / JCM 1990 / NBRC 0083 / IGC 2968</strain>
    </source>
</reference>
<protein>
    <recommendedName>
        <fullName>Chromatin modification-related protein YNG2</fullName>
    </recommendedName>
    <alternativeName>
        <fullName>ING1 homolog 2</fullName>
    </alternativeName>
</protein>
<evidence type="ECO:0000250" key="1"/>
<evidence type="ECO:0000250" key="2">
    <source>
        <dbReference type="UniProtKB" id="Q9UK53"/>
    </source>
</evidence>
<evidence type="ECO:0000255" key="3"/>
<evidence type="ECO:0000255" key="4">
    <source>
        <dbReference type="PROSITE-ProRule" id="PRU00146"/>
    </source>
</evidence>
<evidence type="ECO:0000256" key="5">
    <source>
        <dbReference type="SAM" id="MobiDB-lite"/>
    </source>
</evidence>
<evidence type="ECO:0000305" key="6"/>
<proteinExistence type="inferred from homology"/>
<sequence length="285" mass="32437">MDTTTVLDKYTQDLSNLPLEVKHLLQELKNKDVQLQEARKRYQTKDNQIHKFIRANGTLTKHPKEQQIYNKVEEDMVLVKKLQKEKILLANTALFLVSKHLSNFETDIAKLEKDELLPPVDNVMELDTPSSDMNSVINGLSDNLSGTTTPRGHSASTPVADNAANSMLRKAQKRKHALGMKGASGLTRPSKRMKSEDFEDKKYDNDSLSRPNEGPGNNGEDADNNLYCFCQRVSFGEMIGCDNDDCKFEWFHWSCVGITAPPKDDEIWYCPDCAPKMEKRKKKRK</sequence>
<comment type="function">
    <text evidence="1">Component of the NuA4 histone acetyltransferase complex which is involved in transcriptional activation of selected genes principally by acetylation of nucleosomal histone H4 and H2A. The NuA4 complex is also involved in DNA repair. Involved in cell cycle progression and meiosis (By similarity).</text>
</comment>
<comment type="subunit">
    <text evidence="1">Interacts with H3K4me3 and to a lesser extent with H3K4me2. Component of the NuA4 histone acetyltransferase complex.</text>
</comment>
<comment type="subcellular location">
    <subcellularLocation>
        <location evidence="1">Nucleus</location>
    </subcellularLocation>
</comment>
<comment type="domain">
    <text evidence="1">The PHD-type zinc finger mediates the binding to H3K4me3.</text>
</comment>
<comment type="similarity">
    <text evidence="6">Belongs to the ING family.</text>
</comment>
<name>YNG2_DEBHA</name>
<organism>
    <name type="scientific">Debaryomyces hansenii (strain ATCC 36239 / CBS 767 / BCRC 21394 / JCM 1990 / NBRC 0083 / IGC 2968)</name>
    <name type="common">Yeast</name>
    <name type="synonym">Torulaspora hansenii</name>
    <dbReference type="NCBI Taxonomy" id="284592"/>
    <lineage>
        <taxon>Eukaryota</taxon>
        <taxon>Fungi</taxon>
        <taxon>Dikarya</taxon>
        <taxon>Ascomycota</taxon>
        <taxon>Saccharomycotina</taxon>
        <taxon>Pichiomycetes</taxon>
        <taxon>Debaryomycetaceae</taxon>
        <taxon>Debaryomyces</taxon>
    </lineage>
</organism>
<keyword id="KW-0131">Cell cycle</keyword>
<keyword id="KW-0156">Chromatin regulator</keyword>
<keyword id="KW-0175">Coiled coil</keyword>
<keyword id="KW-0227">DNA damage</keyword>
<keyword id="KW-0234">DNA repair</keyword>
<keyword id="KW-0469">Meiosis</keyword>
<keyword id="KW-0479">Metal-binding</keyword>
<keyword id="KW-0539">Nucleus</keyword>
<keyword id="KW-1185">Reference proteome</keyword>
<keyword id="KW-0862">Zinc</keyword>
<keyword id="KW-0863">Zinc-finger</keyword>
<gene>
    <name type="primary">YNG2</name>
    <name type="ordered locus">DEHA2E20746g</name>
</gene>